<accession>Q88VQ7</accession>
<accession>F9UPU5</accession>
<keyword id="KW-0030">Aminoacyl-tRNA synthetase</keyword>
<keyword id="KW-0067">ATP-binding</keyword>
<keyword id="KW-0963">Cytoplasm</keyword>
<keyword id="KW-0436">Ligase</keyword>
<keyword id="KW-0547">Nucleotide-binding</keyword>
<keyword id="KW-0648">Protein biosynthesis</keyword>
<keyword id="KW-1185">Reference proteome</keyword>
<organism>
    <name type="scientific">Lactiplantibacillus plantarum (strain ATCC BAA-793 / NCIMB 8826 / WCFS1)</name>
    <name type="common">Lactobacillus plantarum</name>
    <dbReference type="NCBI Taxonomy" id="220668"/>
    <lineage>
        <taxon>Bacteria</taxon>
        <taxon>Bacillati</taxon>
        <taxon>Bacillota</taxon>
        <taxon>Bacilli</taxon>
        <taxon>Lactobacillales</taxon>
        <taxon>Lactobacillaceae</taxon>
        <taxon>Lactiplantibacillus</taxon>
    </lineage>
</organism>
<gene>
    <name evidence="1" type="primary">hisS</name>
    <name type="ordered locus">lp_1981</name>
</gene>
<feature type="chain" id="PRO_0000136179" description="Histidine--tRNA ligase">
    <location>
        <begin position="1"/>
        <end position="426"/>
    </location>
</feature>
<comment type="catalytic activity">
    <reaction evidence="1">
        <text>tRNA(His) + L-histidine + ATP = L-histidyl-tRNA(His) + AMP + diphosphate + H(+)</text>
        <dbReference type="Rhea" id="RHEA:17313"/>
        <dbReference type="Rhea" id="RHEA-COMP:9665"/>
        <dbReference type="Rhea" id="RHEA-COMP:9689"/>
        <dbReference type="ChEBI" id="CHEBI:15378"/>
        <dbReference type="ChEBI" id="CHEBI:30616"/>
        <dbReference type="ChEBI" id="CHEBI:33019"/>
        <dbReference type="ChEBI" id="CHEBI:57595"/>
        <dbReference type="ChEBI" id="CHEBI:78442"/>
        <dbReference type="ChEBI" id="CHEBI:78527"/>
        <dbReference type="ChEBI" id="CHEBI:456215"/>
        <dbReference type="EC" id="6.1.1.21"/>
    </reaction>
</comment>
<comment type="subunit">
    <text evidence="1">Homodimer.</text>
</comment>
<comment type="subcellular location">
    <subcellularLocation>
        <location evidence="1">Cytoplasm</location>
    </subcellularLocation>
</comment>
<comment type="similarity">
    <text evidence="1">Belongs to the class-II aminoacyl-tRNA synthetase family.</text>
</comment>
<sequence length="426" mass="47904">MRYQRPKGTADILPGDSEKWQYVEATARAVFKTYQFKEIRTPMFENFEVFSRSAGDTSDIVTKEMYDFHDKGDRHITLRPEGTAGVVRAFVENKLYGPQVLKPYKVYYMGPMFRYERPQSGRLREFHQLGVEAFGSESAALDVEVIAMGYNLLKTFGLTDLKLVINTLGDQQTRDDYRQALIDYLEPHFDELSDDSKERLHKNPLRVLDSKAPEDQQFVADAPSILDYLSPEAQAHFDQTKTYLDALAIPYEIDATMVRGLDYYNHTIFEIMTHSKALGKGYTTICAGGRYNGLVKELGGPEVSGVGFGLGVERLLVLMDAENIAVPTDDQLDVYVVGIGDTASATTLKLVQALRAAGYKAERDYLDRKPKAQFKSADRLNARYTMTVGETELADQVVNLKAMATGEETKVAMADIYQDAHQVLDK</sequence>
<dbReference type="EC" id="6.1.1.21" evidence="1"/>
<dbReference type="EMBL" id="AL935263">
    <property type="protein sequence ID" value="CCC79234.1"/>
    <property type="molecule type" value="Genomic_DNA"/>
</dbReference>
<dbReference type="RefSeq" id="WP_003640691.1">
    <property type="nucleotide sequence ID" value="NC_004567.2"/>
</dbReference>
<dbReference type="RefSeq" id="YP_004889748.1">
    <property type="nucleotide sequence ID" value="NC_004567.2"/>
</dbReference>
<dbReference type="SMR" id="Q88VQ7"/>
<dbReference type="STRING" id="220668.lp_1981"/>
<dbReference type="EnsemblBacteria" id="CCC79234">
    <property type="protein sequence ID" value="CCC79234"/>
    <property type="gene ID" value="lp_1981"/>
</dbReference>
<dbReference type="GeneID" id="77218329"/>
<dbReference type="KEGG" id="lpl:lp_1981"/>
<dbReference type="PATRIC" id="fig|220668.9.peg.1674"/>
<dbReference type="eggNOG" id="COG0124">
    <property type="taxonomic scope" value="Bacteria"/>
</dbReference>
<dbReference type="HOGENOM" id="CLU_025113_1_1_9"/>
<dbReference type="OrthoDB" id="9800814at2"/>
<dbReference type="PhylomeDB" id="Q88VQ7"/>
<dbReference type="Proteomes" id="UP000000432">
    <property type="component" value="Chromosome"/>
</dbReference>
<dbReference type="GO" id="GO:0005737">
    <property type="term" value="C:cytoplasm"/>
    <property type="evidence" value="ECO:0007669"/>
    <property type="project" value="UniProtKB-SubCell"/>
</dbReference>
<dbReference type="GO" id="GO:0005524">
    <property type="term" value="F:ATP binding"/>
    <property type="evidence" value="ECO:0007669"/>
    <property type="project" value="UniProtKB-UniRule"/>
</dbReference>
<dbReference type="GO" id="GO:0140096">
    <property type="term" value="F:catalytic activity, acting on a protein"/>
    <property type="evidence" value="ECO:0007669"/>
    <property type="project" value="UniProtKB-ARBA"/>
</dbReference>
<dbReference type="GO" id="GO:0004821">
    <property type="term" value="F:histidine-tRNA ligase activity"/>
    <property type="evidence" value="ECO:0007669"/>
    <property type="project" value="UniProtKB-UniRule"/>
</dbReference>
<dbReference type="GO" id="GO:0016740">
    <property type="term" value="F:transferase activity"/>
    <property type="evidence" value="ECO:0007669"/>
    <property type="project" value="UniProtKB-ARBA"/>
</dbReference>
<dbReference type="GO" id="GO:0006427">
    <property type="term" value="P:histidyl-tRNA aminoacylation"/>
    <property type="evidence" value="ECO:0007669"/>
    <property type="project" value="UniProtKB-UniRule"/>
</dbReference>
<dbReference type="CDD" id="cd00773">
    <property type="entry name" value="HisRS-like_core"/>
    <property type="match status" value="1"/>
</dbReference>
<dbReference type="CDD" id="cd00859">
    <property type="entry name" value="HisRS_anticodon"/>
    <property type="match status" value="1"/>
</dbReference>
<dbReference type="FunFam" id="3.30.930.10:FF:000005">
    <property type="entry name" value="Histidine--tRNA ligase"/>
    <property type="match status" value="1"/>
</dbReference>
<dbReference type="Gene3D" id="3.40.50.800">
    <property type="entry name" value="Anticodon-binding domain"/>
    <property type="match status" value="1"/>
</dbReference>
<dbReference type="Gene3D" id="3.30.930.10">
    <property type="entry name" value="Bira Bifunctional Protein, Domain 2"/>
    <property type="match status" value="1"/>
</dbReference>
<dbReference type="HAMAP" id="MF_00127">
    <property type="entry name" value="His_tRNA_synth"/>
    <property type="match status" value="1"/>
</dbReference>
<dbReference type="InterPro" id="IPR006195">
    <property type="entry name" value="aa-tRNA-synth_II"/>
</dbReference>
<dbReference type="InterPro" id="IPR045864">
    <property type="entry name" value="aa-tRNA-synth_II/BPL/LPL"/>
</dbReference>
<dbReference type="InterPro" id="IPR004154">
    <property type="entry name" value="Anticodon-bd"/>
</dbReference>
<dbReference type="InterPro" id="IPR036621">
    <property type="entry name" value="Anticodon-bd_dom_sf"/>
</dbReference>
<dbReference type="InterPro" id="IPR015807">
    <property type="entry name" value="His-tRNA-ligase"/>
</dbReference>
<dbReference type="InterPro" id="IPR041715">
    <property type="entry name" value="HisRS-like_core"/>
</dbReference>
<dbReference type="InterPro" id="IPR004516">
    <property type="entry name" value="HisRS/HisZ"/>
</dbReference>
<dbReference type="InterPro" id="IPR033656">
    <property type="entry name" value="HisRS_anticodon"/>
</dbReference>
<dbReference type="NCBIfam" id="TIGR00442">
    <property type="entry name" value="hisS"/>
    <property type="match status" value="1"/>
</dbReference>
<dbReference type="PANTHER" id="PTHR43707:SF1">
    <property type="entry name" value="HISTIDINE--TRNA LIGASE, MITOCHONDRIAL-RELATED"/>
    <property type="match status" value="1"/>
</dbReference>
<dbReference type="PANTHER" id="PTHR43707">
    <property type="entry name" value="HISTIDYL-TRNA SYNTHETASE"/>
    <property type="match status" value="1"/>
</dbReference>
<dbReference type="Pfam" id="PF03129">
    <property type="entry name" value="HGTP_anticodon"/>
    <property type="match status" value="1"/>
</dbReference>
<dbReference type="Pfam" id="PF13393">
    <property type="entry name" value="tRNA-synt_His"/>
    <property type="match status" value="1"/>
</dbReference>
<dbReference type="PIRSF" id="PIRSF001549">
    <property type="entry name" value="His-tRNA_synth"/>
    <property type="match status" value="1"/>
</dbReference>
<dbReference type="SUPFAM" id="SSF52954">
    <property type="entry name" value="Class II aaRS ABD-related"/>
    <property type="match status" value="1"/>
</dbReference>
<dbReference type="SUPFAM" id="SSF55681">
    <property type="entry name" value="Class II aaRS and biotin synthetases"/>
    <property type="match status" value="1"/>
</dbReference>
<dbReference type="PROSITE" id="PS50862">
    <property type="entry name" value="AA_TRNA_LIGASE_II"/>
    <property type="match status" value="1"/>
</dbReference>
<reference key="1">
    <citation type="journal article" date="2003" name="Proc. Natl. Acad. Sci. U.S.A.">
        <title>Complete genome sequence of Lactobacillus plantarum WCFS1.</title>
        <authorList>
            <person name="Kleerebezem M."/>
            <person name="Boekhorst J."/>
            <person name="van Kranenburg R."/>
            <person name="Molenaar D."/>
            <person name="Kuipers O.P."/>
            <person name="Leer R."/>
            <person name="Tarchini R."/>
            <person name="Peters S.A."/>
            <person name="Sandbrink H.M."/>
            <person name="Fiers M.W.E.J."/>
            <person name="Stiekema W."/>
            <person name="Klein Lankhorst R.M."/>
            <person name="Bron P.A."/>
            <person name="Hoffer S.M."/>
            <person name="Nierop Groot M.N."/>
            <person name="Kerkhoven R."/>
            <person name="De Vries M."/>
            <person name="Ursing B."/>
            <person name="De Vos W.M."/>
            <person name="Siezen R.J."/>
        </authorList>
    </citation>
    <scope>NUCLEOTIDE SEQUENCE [LARGE SCALE GENOMIC DNA]</scope>
    <source>
        <strain>ATCC BAA-793 / NCIMB 8826 / WCFS1</strain>
    </source>
</reference>
<reference key="2">
    <citation type="journal article" date="2012" name="J. Bacteriol.">
        <title>Complete resequencing and reannotation of the Lactobacillus plantarum WCFS1 genome.</title>
        <authorList>
            <person name="Siezen R.J."/>
            <person name="Francke C."/>
            <person name="Renckens B."/>
            <person name="Boekhorst J."/>
            <person name="Wels M."/>
            <person name="Kleerebezem M."/>
            <person name="van Hijum S.A."/>
        </authorList>
    </citation>
    <scope>NUCLEOTIDE SEQUENCE [LARGE SCALE GENOMIC DNA]</scope>
    <scope>GENOME REANNOTATION</scope>
    <source>
        <strain>ATCC BAA-793 / NCIMB 8826 / WCFS1</strain>
    </source>
</reference>
<proteinExistence type="inferred from homology"/>
<evidence type="ECO:0000255" key="1">
    <source>
        <dbReference type="HAMAP-Rule" id="MF_00127"/>
    </source>
</evidence>
<name>SYH_LACPL</name>
<protein>
    <recommendedName>
        <fullName evidence="1">Histidine--tRNA ligase</fullName>
        <ecNumber evidence="1">6.1.1.21</ecNumber>
    </recommendedName>
    <alternativeName>
        <fullName evidence="1">Histidyl-tRNA synthetase</fullName>
        <shortName evidence="1">HisRS</shortName>
    </alternativeName>
</protein>